<gene>
    <name evidence="1" type="primary">glpK</name>
    <name type="ordered locus">Meso_1598</name>
</gene>
<proteinExistence type="inferred from homology"/>
<name>GLPK_CHESB</name>
<dbReference type="EC" id="2.7.1.30" evidence="1"/>
<dbReference type="EMBL" id="CP000390">
    <property type="protein sequence ID" value="ABG62993.1"/>
    <property type="molecule type" value="Genomic_DNA"/>
</dbReference>
<dbReference type="SMR" id="Q11HY2"/>
<dbReference type="STRING" id="266779.Meso_1598"/>
<dbReference type="KEGG" id="mes:Meso_1598"/>
<dbReference type="eggNOG" id="COG0554">
    <property type="taxonomic scope" value="Bacteria"/>
</dbReference>
<dbReference type="HOGENOM" id="CLU_009281_2_3_5"/>
<dbReference type="OrthoDB" id="9805576at2"/>
<dbReference type="UniPathway" id="UPA00618">
    <property type="reaction ID" value="UER00672"/>
</dbReference>
<dbReference type="GO" id="GO:0005829">
    <property type="term" value="C:cytosol"/>
    <property type="evidence" value="ECO:0007669"/>
    <property type="project" value="TreeGrafter"/>
</dbReference>
<dbReference type="GO" id="GO:0005524">
    <property type="term" value="F:ATP binding"/>
    <property type="evidence" value="ECO:0007669"/>
    <property type="project" value="UniProtKB-UniRule"/>
</dbReference>
<dbReference type="GO" id="GO:0004370">
    <property type="term" value="F:glycerol kinase activity"/>
    <property type="evidence" value="ECO:0000250"/>
    <property type="project" value="UniProtKB"/>
</dbReference>
<dbReference type="GO" id="GO:0019563">
    <property type="term" value="P:glycerol catabolic process"/>
    <property type="evidence" value="ECO:0007669"/>
    <property type="project" value="UniProtKB-UniRule"/>
</dbReference>
<dbReference type="GO" id="GO:0006071">
    <property type="term" value="P:glycerol metabolic process"/>
    <property type="evidence" value="ECO:0000250"/>
    <property type="project" value="UniProtKB"/>
</dbReference>
<dbReference type="GO" id="GO:0006072">
    <property type="term" value="P:glycerol-3-phosphate metabolic process"/>
    <property type="evidence" value="ECO:0007669"/>
    <property type="project" value="InterPro"/>
</dbReference>
<dbReference type="CDD" id="cd07786">
    <property type="entry name" value="FGGY_EcGK_like"/>
    <property type="match status" value="1"/>
</dbReference>
<dbReference type="FunFam" id="3.30.420.40:FF:000007">
    <property type="entry name" value="Glycerol kinase"/>
    <property type="match status" value="1"/>
</dbReference>
<dbReference type="FunFam" id="3.30.420.40:FF:000008">
    <property type="entry name" value="Glycerol kinase"/>
    <property type="match status" value="1"/>
</dbReference>
<dbReference type="Gene3D" id="3.30.420.40">
    <property type="match status" value="2"/>
</dbReference>
<dbReference type="HAMAP" id="MF_00186">
    <property type="entry name" value="Glycerol_kin"/>
    <property type="match status" value="1"/>
</dbReference>
<dbReference type="InterPro" id="IPR043129">
    <property type="entry name" value="ATPase_NBD"/>
</dbReference>
<dbReference type="InterPro" id="IPR000577">
    <property type="entry name" value="Carb_kinase_FGGY"/>
</dbReference>
<dbReference type="InterPro" id="IPR018483">
    <property type="entry name" value="Carb_kinase_FGGY_CS"/>
</dbReference>
<dbReference type="InterPro" id="IPR018485">
    <property type="entry name" value="FGGY_C"/>
</dbReference>
<dbReference type="InterPro" id="IPR018484">
    <property type="entry name" value="FGGY_N"/>
</dbReference>
<dbReference type="InterPro" id="IPR005999">
    <property type="entry name" value="Glycerol_kin"/>
</dbReference>
<dbReference type="NCBIfam" id="TIGR01311">
    <property type="entry name" value="glycerol_kin"/>
    <property type="match status" value="1"/>
</dbReference>
<dbReference type="NCBIfam" id="NF000756">
    <property type="entry name" value="PRK00047.1"/>
    <property type="match status" value="1"/>
</dbReference>
<dbReference type="PANTHER" id="PTHR10196:SF78">
    <property type="entry name" value="GLYCEROL KINASE"/>
    <property type="match status" value="1"/>
</dbReference>
<dbReference type="PANTHER" id="PTHR10196">
    <property type="entry name" value="SUGAR KINASE"/>
    <property type="match status" value="1"/>
</dbReference>
<dbReference type="Pfam" id="PF02782">
    <property type="entry name" value="FGGY_C"/>
    <property type="match status" value="1"/>
</dbReference>
<dbReference type="Pfam" id="PF00370">
    <property type="entry name" value="FGGY_N"/>
    <property type="match status" value="1"/>
</dbReference>
<dbReference type="PIRSF" id="PIRSF000538">
    <property type="entry name" value="GlpK"/>
    <property type="match status" value="1"/>
</dbReference>
<dbReference type="SUPFAM" id="SSF53067">
    <property type="entry name" value="Actin-like ATPase domain"/>
    <property type="match status" value="2"/>
</dbReference>
<dbReference type="PROSITE" id="PS00933">
    <property type="entry name" value="FGGY_KINASES_1"/>
    <property type="match status" value="1"/>
</dbReference>
<dbReference type="PROSITE" id="PS00445">
    <property type="entry name" value="FGGY_KINASES_2"/>
    <property type="match status" value="1"/>
</dbReference>
<sequence>MTGYILAIDQGTTSSRAVIFDGAMKIVAVGQKEFPQHYPASGWVEHDPEDIWKSVVATVKTALRKAKLEASRITAIGITNQRETAVIWDRATGMPIHNAIVWQDRRTAPLCAKLKKAGLEPKFTRKTGLLLDPYFSGTKFAWLLDNVKGARRRAEKGELLAGTIDTYLIWRLTGGRMHATDATNASRTLLYNISKNAWDADLLKILRIPTALLPEVKDCAAEFGVTEKKIFGAEIPILGVAGDQQAATIGQACFEPGMLKSTYGTGCFAVLNTGERLIRSKNRLLSTIAYRLDGKTTYALEGSIFIAGAAVQWLRDGIKVIGKAAESGALAERSDETQQIYLVPAFVGLGAPHWDADARGAIFGLTRNSGPAEFARAALESVAYQTHDLLVAMKRDCGNTFGKTVLRVDGGMVASSWTMQCLADILDAPVDSPTITETTALGAAWLAGSKAGIWPDRATFAKSWALERRFEPQMDGRQRKAKLAGWADAVSRTLTARAPC</sequence>
<reference key="1">
    <citation type="submission" date="2006-06" db="EMBL/GenBank/DDBJ databases">
        <title>Complete sequence of chromosome of Mesorhizobium sp. BNC1.</title>
        <authorList>
            <consortium name="US DOE Joint Genome Institute"/>
            <person name="Copeland A."/>
            <person name="Lucas S."/>
            <person name="Lapidus A."/>
            <person name="Barry K."/>
            <person name="Detter J.C."/>
            <person name="Glavina del Rio T."/>
            <person name="Hammon N."/>
            <person name="Israni S."/>
            <person name="Dalin E."/>
            <person name="Tice H."/>
            <person name="Pitluck S."/>
            <person name="Chertkov O."/>
            <person name="Brettin T."/>
            <person name="Bruce D."/>
            <person name="Han C."/>
            <person name="Tapia R."/>
            <person name="Gilna P."/>
            <person name="Schmutz J."/>
            <person name="Larimer F."/>
            <person name="Land M."/>
            <person name="Hauser L."/>
            <person name="Kyrpides N."/>
            <person name="Mikhailova N."/>
            <person name="Richardson P."/>
        </authorList>
    </citation>
    <scope>NUCLEOTIDE SEQUENCE [LARGE SCALE GENOMIC DNA]</scope>
    <source>
        <strain>BNC1</strain>
    </source>
</reference>
<feature type="chain" id="PRO_1000020745" description="Glycerol kinase">
    <location>
        <begin position="1"/>
        <end position="500"/>
    </location>
</feature>
<feature type="binding site" evidence="1">
    <location>
        <position position="12"/>
    </location>
    <ligand>
        <name>ADP</name>
        <dbReference type="ChEBI" id="CHEBI:456216"/>
    </ligand>
</feature>
<feature type="binding site" evidence="1">
    <location>
        <position position="12"/>
    </location>
    <ligand>
        <name>ATP</name>
        <dbReference type="ChEBI" id="CHEBI:30616"/>
    </ligand>
</feature>
<feature type="binding site" evidence="1">
    <location>
        <position position="12"/>
    </location>
    <ligand>
        <name>sn-glycerol 3-phosphate</name>
        <dbReference type="ChEBI" id="CHEBI:57597"/>
    </ligand>
</feature>
<feature type="binding site" evidence="1">
    <location>
        <position position="13"/>
    </location>
    <ligand>
        <name>ATP</name>
        <dbReference type="ChEBI" id="CHEBI:30616"/>
    </ligand>
</feature>
<feature type="binding site" evidence="1">
    <location>
        <position position="14"/>
    </location>
    <ligand>
        <name>ATP</name>
        <dbReference type="ChEBI" id="CHEBI:30616"/>
    </ligand>
</feature>
<feature type="binding site" evidence="1">
    <location>
        <position position="16"/>
    </location>
    <ligand>
        <name>ADP</name>
        <dbReference type="ChEBI" id="CHEBI:456216"/>
    </ligand>
</feature>
<feature type="binding site" evidence="1">
    <location>
        <position position="82"/>
    </location>
    <ligand>
        <name>glycerol</name>
        <dbReference type="ChEBI" id="CHEBI:17754"/>
    </ligand>
</feature>
<feature type="binding site" evidence="1">
    <location>
        <position position="82"/>
    </location>
    <ligand>
        <name>sn-glycerol 3-phosphate</name>
        <dbReference type="ChEBI" id="CHEBI:57597"/>
    </ligand>
</feature>
<feature type="binding site" evidence="1">
    <location>
        <position position="83"/>
    </location>
    <ligand>
        <name>glycerol</name>
        <dbReference type="ChEBI" id="CHEBI:17754"/>
    </ligand>
</feature>
<feature type="binding site" evidence="1">
    <location>
        <position position="83"/>
    </location>
    <ligand>
        <name>sn-glycerol 3-phosphate</name>
        <dbReference type="ChEBI" id="CHEBI:57597"/>
    </ligand>
</feature>
<feature type="binding site" evidence="1">
    <location>
        <position position="134"/>
    </location>
    <ligand>
        <name>glycerol</name>
        <dbReference type="ChEBI" id="CHEBI:17754"/>
    </ligand>
</feature>
<feature type="binding site" evidence="1">
    <location>
        <position position="134"/>
    </location>
    <ligand>
        <name>sn-glycerol 3-phosphate</name>
        <dbReference type="ChEBI" id="CHEBI:57597"/>
    </ligand>
</feature>
<feature type="binding site" evidence="1">
    <location>
        <position position="243"/>
    </location>
    <ligand>
        <name>glycerol</name>
        <dbReference type="ChEBI" id="CHEBI:17754"/>
    </ligand>
</feature>
<feature type="binding site" evidence="1">
    <location>
        <position position="243"/>
    </location>
    <ligand>
        <name>sn-glycerol 3-phosphate</name>
        <dbReference type="ChEBI" id="CHEBI:57597"/>
    </ligand>
</feature>
<feature type="binding site" evidence="1">
    <location>
        <position position="244"/>
    </location>
    <ligand>
        <name>glycerol</name>
        <dbReference type="ChEBI" id="CHEBI:17754"/>
    </ligand>
</feature>
<feature type="binding site" evidence="1">
    <location>
        <position position="265"/>
    </location>
    <ligand>
        <name>ADP</name>
        <dbReference type="ChEBI" id="CHEBI:456216"/>
    </ligand>
</feature>
<feature type="binding site" evidence="1">
    <location>
        <position position="265"/>
    </location>
    <ligand>
        <name>ATP</name>
        <dbReference type="ChEBI" id="CHEBI:30616"/>
    </ligand>
</feature>
<feature type="binding site" evidence="1">
    <location>
        <position position="308"/>
    </location>
    <ligand>
        <name>ADP</name>
        <dbReference type="ChEBI" id="CHEBI:456216"/>
    </ligand>
</feature>
<feature type="binding site" evidence="1">
    <location>
        <position position="308"/>
    </location>
    <ligand>
        <name>ATP</name>
        <dbReference type="ChEBI" id="CHEBI:30616"/>
    </ligand>
</feature>
<feature type="binding site" evidence="1">
    <location>
        <position position="312"/>
    </location>
    <ligand>
        <name>ATP</name>
        <dbReference type="ChEBI" id="CHEBI:30616"/>
    </ligand>
</feature>
<feature type="binding site" evidence="1">
    <location>
        <position position="411"/>
    </location>
    <ligand>
        <name>ADP</name>
        <dbReference type="ChEBI" id="CHEBI:456216"/>
    </ligand>
</feature>
<feature type="binding site" evidence="1">
    <location>
        <position position="411"/>
    </location>
    <ligand>
        <name>ATP</name>
        <dbReference type="ChEBI" id="CHEBI:30616"/>
    </ligand>
</feature>
<organism>
    <name type="scientific">Chelativorans sp. (strain BNC1)</name>
    <dbReference type="NCBI Taxonomy" id="266779"/>
    <lineage>
        <taxon>Bacteria</taxon>
        <taxon>Pseudomonadati</taxon>
        <taxon>Pseudomonadota</taxon>
        <taxon>Alphaproteobacteria</taxon>
        <taxon>Hyphomicrobiales</taxon>
        <taxon>Phyllobacteriaceae</taxon>
        <taxon>Chelativorans</taxon>
    </lineage>
</organism>
<protein>
    <recommendedName>
        <fullName evidence="1">Glycerol kinase</fullName>
        <ecNumber evidence="1">2.7.1.30</ecNumber>
    </recommendedName>
    <alternativeName>
        <fullName evidence="1">ATP:glycerol 3-phosphotransferase</fullName>
    </alternativeName>
    <alternativeName>
        <fullName evidence="1">Glycerokinase</fullName>
        <shortName evidence="1">GK</shortName>
    </alternativeName>
</protein>
<accession>Q11HY2</accession>
<comment type="function">
    <text evidence="1">Key enzyme in the regulation of glycerol uptake and metabolism. Catalyzes the phosphorylation of glycerol to yield sn-glycerol 3-phosphate.</text>
</comment>
<comment type="catalytic activity">
    <reaction evidence="1">
        <text>glycerol + ATP = sn-glycerol 3-phosphate + ADP + H(+)</text>
        <dbReference type="Rhea" id="RHEA:21644"/>
        <dbReference type="ChEBI" id="CHEBI:15378"/>
        <dbReference type="ChEBI" id="CHEBI:17754"/>
        <dbReference type="ChEBI" id="CHEBI:30616"/>
        <dbReference type="ChEBI" id="CHEBI:57597"/>
        <dbReference type="ChEBI" id="CHEBI:456216"/>
        <dbReference type="EC" id="2.7.1.30"/>
    </reaction>
</comment>
<comment type="activity regulation">
    <text evidence="1">Inhibited by fructose 1,6-bisphosphate (FBP).</text>
</comment>
<comment type="pathway">
    <text evidence="1">Polyol metabolism; glycerol degradation via glycerol kinase pathway; sn-glycerol 3-phosphate from glycerol: step 1/1.</text>
</comment>
<comment type="similarity">
    <text evidence="1">Belongs to the FGGY kinase family.</text>
</comment>
<evidence type="ECO:0000255" key="1">
    <source>
        <dbReference type="HAMAP-Rule" id="MF_00186"/>
    </source>
</evidence>
<keyword id="KW-0067">ATP-binding</keyword>
<keyword id="KW-0319">Glycerol metabolism</keyword>
<keyword id="KW-0418">Kinase</keyword>
<keyword id="KW-0547">Nucleotide-binding</keyword>
<keyword id="KW-0808">Transferase</keyword>